<sequence>ADTGEGDFLAEGGGVR</sequence>
<reference key="1">
    <citation type="journal article" date="1985" name="J. Biochem.">
        <title>Fibrinopeptides A and B of Japanese monkey (Macaca fuscata) and patas monkey (Erythrocebus patas): their amino acid sequences, restricted mutations, and a molecular phylogeny for macaques, guenons, and baboons.</title>
        <authorList>
            <person name="Nakamura S."/>
            <person name="Takenaka O."/>
            <person name="Takahashi K."/>
        </authorList>
    </citation>
    <scope>PROTEIN SEQUENCE</scope>
</reference>
<gene>
    <name type="primary">FGA</name>
</gene>
<evidence type="ECO:0000250" key="1">
    <source>
        <dbReference type="UniProtKB" id="E9PV24"/>
    </source>
</evidence>
<evidence type="ECO:0000250" key="2">
    <source>
        <dbReference type="UniProtKB" id="P02671"/>
    </source>
</evidence>
<accession>P68112</accession>
<accession>P12803</accession>
<organism>
    <name type="scientific">Erythrocebus patas</name>
    <name type="common">Red guenon</name>
    <name type="synonym">Cercopithecus patas</name>
    <dbReference type="NCBI Taxonomy" id="9538"/>
    <lineage>
        <taxon>Eukaryota</taxon>
        <taxon>Metazoa</taxon>
        <taxon>Chordata</taxon>
        <taxon>Craniata</taxon>
        <taxon>Vertebrata</taxon>
        <taxon>Euteleostomi</taxon>
        <taxon>Mammalia</taxon>
        <taxon>Eutheria</taxon>
        <taxon>Euarchontoglires</taxon>
        <taxon>Primates</taxon>
        <taxon>Haplorrhini</taxon>
        <taxon>Catarrhini</taxon>
        <taxon>Cercopithecidae</taxon>
        <taxon>Cercopithecinae</taxon>
        <taxon>Erythrocebus</taxon>
    </lineage>
</organism>
<keyword id="KW-1064">Adaptive immunity</keyword>
<keyword id="KW-0094">Blood coagulation</keyword>
<keyword id="KW-0175">Coiled coil</keyword>
<keyword id="KW-0903">Direct protein sequencing</keyword>
<keyword id="KW-1015">Disulfide bond</keyword>
<keyword id="KW-0356">Hemostasis</keyword>
<keyword id="KW-0391">Immunity</keyword>
<keyword id="KW-0399">Innate immunity</keyword>
<keyword id="KW-0964">Secreted</keyword>
<comment type="function">
    <text evidence="1">Cleaved by the protease thrombin to yield monomers which, together with fibrinogen beta (FGB) and fibrinogen gamma (FGG), polymerize to form an insoluble fibrin matrix. Fibrin has a major function in hemostasis as one of the primary components of blood clots. In addition, functions during the early stages of wound repair to stabilize the lesion and guide cell migration during re-epithelialization. Was originally thought to be essential for platelet aggregation, based on in vitro studies using anticoagulated blood. However, subsequent studies have shown that it is not absolutely required for thrombus formation in vivo. Enhances expression of SELP in activated platelets via an ITGB3-dependent pathway. Maternal fibrinogen is essential for successful pregnancy. Fibrin deposition is also associated with infection, where it protects against IFNG-mediated hemorrhage. May also facilitate the immune response via both innate and T-cell mediated pathways.</text>
</comment>
<comment type="subunit">
    <text evidence="2">Heterohexamer; disulfide linked. Contains 2 sets of 3 non-identical chains (alpha, beta and gamma). The 2 heterotrimers are in head to head conformation with the N-termini in a small central domain (By similarity).</text>
</comment>
<comment type="subcellular location">
    <subcellularLocation>
        <location>Secreted</location>
    </subcellularLocation>
</comment>
<comment type="domain">
    <text evidence="2">A long coiled coil structure formed by 3 polypeptide chains connects the central nodule to the C-terminal domains (distal nodules). The long C-terminal ends of the alpha chains fold back, contributing a fourth strand to the coiled coil structure.</text>
</comment>
<comment type="PTM">
    <text>Conversion of fibrinogen to fibrin is triggered by thrombin, which cleaves fibrinopeptides A and B from alpha and beta chains, and thus exposes the N-terminal polymerization sites responsible for the formation of the soft clot. The soft clot is converted into the hard clot by factor XIIIA which catalyzes the epsilon-(gamma-glutamyl)lysine cross-linking between gamma chains (stronger) and between alpha chains (weaker) of different monomers.</text>
</comment>
<comment type="PTM">
    <text>Forms F13A-mediated cross-links between a glutamine and the epsilon-amino group of a lysine residue, forming fibronectin-fibrinogen heteropolymers.</text>
</comment>
<dbReference type="PIR" id="B24180">
    <property type="entry name" value="B24180"/>
</dbReference>
<dbReference type="SMR" id="P68112"/>
<dbReference type="GO" id="GO:0005576">
    <property type="term" value="C:extracellular region"/>
    <property type="evidence" value="ECO:0007669"/>
    <property type="project" value="UniProtKB-SubCell"/>
</dbReference>
<dbReference type="GO" id="GO:0002250">
    <property type="term" value="P:adaptive immune response"/>
    <property type="evidence" value="ECO:0007669"/>
    <property type="project" value="UniProtKB-KW"/>
</dbReference>
<dbReference type="GO" id="GO:0007596">
    <property type="term" value="P:blood coagulation"/>
    <property type="evidence" value="ECO:0007669"/>
    <property type="project" value="UniProtKB-KW"/>
</dbReference>
<dbReference type="GO" id="GO:0045087">
    <property type="term" value="P:innate immune response"/>
    <property type="evidence" value="ECO:0007669"/>
    <property type="project" value="UniProtKB-KW"/>
</dbReference>
<protein>
    <recommendedName>
        <fullName>Fibrinogen alpha chain</fullName>
    </recommendedName>
    <component>
        <recommendedName>
            <fullName>Fibrinopeptide A</fullName>
        </recommendedName>
    </component>
</protein>
<name>FIBA_ERYPA</name>
<proteinExistence type="evidence at protein level"/>
<feature type="peptide" id="PRO_0000009018" description="Fibrinopeptide A">
    <location>
        <begin position="1"/>
        <end position="16"/>
    </location>
</feature>
<feature type="non-terminal residue">
    <location>
        <position position="16"/>
    </location>
</feature>